<organism>
    <name type="scientific">Paracoccus denitrificans (strain Pd 1222)</name>
    <dbReference type="NCBI Taxonomy" id="318586"/>
    <lineage>
        <taxon>Bacteria</taxon>
        <taxon>Pseudomonadati</taxon>
        <taxon>Pseudomonadota</taxon>
        <taxon>Alphaproteobacteria</taxon>
        <taxon>Rhodobacterales</taxon>
        <taxon>Paracoccaceae</taxon>
        <taxon>Paracoccus</taxon>
    </lineage>
</organism>
<dbReference type="EC" id="2.2.1.2" evidence="1"/>
<dbReference type="EMBL" id="CP000489">
    <property type="protein sequence ID" value="ABL70586.1"/>
    <property type="molecule type" value="Genomic_DNA"/>
</dbReference>
<dbReference type="RefSeq" id="WP_011748779.1">
    <property type="nucleotide sequence ID" value="NC_008686.1"/>
</dbReference>
<dbReference type="SMR" id="A1B4Z2"/>
<dbReference type="STRING" id="318586.Pden_2499"/>
<dbReference type="EnsemblBacteria" id="ABL70586">
    <property type="protein sequence ID" value="ABL70586"/>
    <property type="gene ID" value="Pden_2499"/>
</dbReference>
<dbReference type="GeneID" id="93450892"/>
<dbReference type="KEGG" id="pde:Pden_2499"/>
<dbReference type="eggNOG" id="COG0176">
    <property type="taxonomic scope" value="Bacteria"/>
</dbReference>
<dbReference type="HOGENOM" id="CLU_079764_0_0_5"/>
<dbReference type="OrthoDB" id="9807051at2"/>
<dbReference type="UniPathway" id="UPA00115">
    <property type="reaction ID" value="UER00414"/>
</dbReference>
<dbReference type="Proteomes" id="UP000000361">
    <property type="component" value="Chromosome 1"/>
</dbReference>
<dbReference type="GO" id="GO:0005737">
    <property type="term" value="C:cytoplasm"/>
    <property type="evidence" value="ECO:0007669"/>
    <property type="project" value="UniProtKB-SubCell"/>
</dbReference>
<dbReference type="GO" id="GO:0016832">
    <property type="term" value="F:aldehyde-lyase activity"/>
    <property type="evidence" value="ECO:0007669"/>
    <property type="project" value="InterPro"/>
</dbReference>
<dbReference type="GO" id="GO:0004801">
    <property type="term" value="F:transaldolase activity"/>
    <property type="evidence" value="ECO:0007669"/>
    <property type="project" value="UniProtKB-UniRule"/>
</dbReference>
<dbReference type="GO" id="GO:0005975">
    <property type="term" value="P:carbohydrate metabolic process"/>
    <property type="evidence" value="ECO:0007669"/>
    <property type="project" value="InterPro"/>
</dbReference>
<dbReference type="GO" id="GO:0006098">
    <property type="term" value="P:pentose-phosphate shunt"/>
    <property type="evidence" value="ECO:0007669"/>
    <property type="project" value="UniProtKB-UniRule"/>
</dbReference>
<dbReference type="CDD" id="cd00956">
    <property type="entry name" value="Transaldolase_FSA"/>
    <property type="match status" value="1"/>
</dbReference>
<dbReference type="FunFam" id="3.20.20.70:FF:000018">
    <property type="entry name" value="Probable transaldolase"/>
    <property type="match status" value="1"/>
</dbReference>
<dbReference type="Gene3D" id="3.20.20.70">
    <property type="entry name" value="Aldolase class I"/>
    <property type="match status" value="1"/>
</dbReference>
<dbReference type="HAMAP" id="MF_00494">
    <property type="entry name" value="Transaldolase_3b"/>
    <property type="match status" value="1"/>
</dbReference>
<dbReference type="InterPro" id="IPR013785">
    <property type="entry name" value="Aldolase_TIM"/>
</dbReference>
<dbReference type="InterPro" id="IPR001585">
    <property type="entry name" value="TAL/FSA"/>
</dbReference>
<dbReference type="InterPro" id="IPR022999">
    <property type="entry name" value="Transaldolase_3B"/>
</dbReference>
<dbReference type="InterPro" id="IPR004731">
    <property type="entry name" value="Transaldolase_3B/F6P_aldolase"/>
</dbReference>
<dbReference type="InterPro" id="IPR018225">
    <property type="entry name" value="Transaldolase_AS"/>
</dbReference>
<dbReference type="InterPro" id="IPR033919">
    <property type="entry name" value="TSA/FSA_arc/bac"/>
</dbReference>
<dbReference type="NCBIfam" id="TIGR00875">
    <property type="entry name" value="fsa_talC_mipB"/>
    <property type="match status" value="1"/>
</dbReference>
<dbReference type="PANTHER" id="PTHR10683:SF40">
    <property type="entry name" value="FRUCTOSE-6-PHOSPHATE ALDOLASE 1-RELATED"/>
    <property type="match status" value="1"/>
</dbReference>
<dbReference type="PANTHER" id="PTHR10683">
    <property type="entry name" value="TRANSALDOLASE"/>
    <property type="match status" value="1"/>
</dbReference>
<dbReference type="Pfam" id="PF00923">
    <property type="entry name" value="TAL_FSA"/>
    <property type="match status" value="1"/>
</dbReference>
<dbReference type="SUPFAM" id="SSF51569">
    <property type="entry name" value="Aldolase"/>
    <property type="match status" value="1"/>
</dbReference>
<dbReference type="PROSITE" id="PS01054">
    <property type="entry name" value="TRANSALDOLASE_1"/>
    <property type="match status" value="1"/>
</dbReference>
<dbReference type="PROSITE" id="PS00958">
    <property type="entry name" value="TRANSALDOLASE_2"/>
    <property type="match status" value="1"/>
</dbReference>
<accession>A1B4Z2</accession>
<evidence type="ECO:0000255" key="1">
    <source>
        <dbReference type="HAMAP-Rule" id="MF_00494"/>
    </source>
</evidence>
<name>TAL_PARDP</name>
<sequence>MKFFVDTADVAAIRELNDLGMVDGVTTNPSLILKSGRDILEVTKEICDIVEGPVSAEVVASKAGDMIREGEHLVKIAPNITVKVPLTWDGLRACKVLSSQGHKVNVTLCFSAAQAILAAKAGATFISPFIGRLDDINFDGMELIAQIREIYDNYDFQTQILAASIRSVNHITDAARIGADVITAPPAVIKAMANHVLTDKGLEQFNADWAKTGQKIV</sequence>
<protein>
    <recommendedName>
        <fullName evidence="1">Probable transaldolase</fullName>
        <ecNumber evidence="1">2.2.1.2</ecNumber>
    </recommendedName>
</protein>
<comment type="function">
    <text evidence="1">Transaldolase is important for the balance of metabolites in the pentose-phosphate pathway.</text>
</comment>
<comment type="catalytic activity">
    <reaction evidence="1">
        <text>D-sedoheptulose 7-phosphate + D-glyceraldehyde 3-phosphate = D-erythrose 4-phosphate + beta-D-fructose 6-phosphate</text>
        <dbReference type="Rhea" id="RHEA:17053"/>
        <dbReference type="ChEBI" id="CHEBI:16897"/>
        <dbReference type="ChEBI" id="CHEBI:57483"/>
        <dbReference type="ChEBI" id="CHEBI:57634"/>
        <dbReference type="ChEBI" id="CHEBI:59776"/>
        <dbReference type="EC" id="2.2.1.2"/>
    </reaction>
</comment>
<comment type="pathway">
    <text evidence="1">Carbohydrate degradation; pentose phosphate pathway; D-glyceraldehyde 3-phosphate and beta-D-fructose 6-phosphate from D-ribose 5-phosphate and D-xylulose 5-phosphate (non-oxidative stage): step 2/3.</text>
</comment>
<comment type="subcellular location">
    <subcellularLocation>
        <location evidence="1">Cytoplasm</location>
    </subcellularLocation>
</comment>
<comment type="similarity">
    <text evidence="1">Belongs to the transaldolase family. Type 3B subfamily.</text>
</comment>
<gene>
    <name evidence="1" type="primary">tal</name>
    <name type="ordered locus">Pden_2499</name>
</gene>
<proteinExistence type="inferred from homology"/>
<reference key="1">
    <citation type="submission" date="2006-12" db="EMBL/GenBank/DDBJ databases">
        <title>Complete sequence of chromosome 1 of Paracoccus denitrificans PD1222.</title>
        <authorList>
            <person name="Copeland A."/>
            <person name="Lucas S."/>
            <person name="Lapidus A."/>
            <person name="Barry K."/>
            <person name="Detter J.C."/>
            <person name="Glavina del Rio T."/>
            <person name="Hammon N."/>
            <person name="Israni S."/>
            <person name="Dalin E."/>
            <person name="Tice H."/>
            <person name="Pitluck S."/>
            <person name="Munk A.C."/>
            <person name="Brettin T."/>
            <person name="Bruce D."/>
            <person name="Han C."/>
            <person name="Tapia R."/>
            <person name="Gilna P."/>
            <person name="Schmutz J."/>
            <person name="Larimer F."/>
            <person name="Land M."/>
            <person name="Hauser L."/>
            <person name="Kyrpides N."/>
            <person name="Lykidis A."/>
            <person name="Spiro S."/>
            <person name="Richardson D.J."/>
            <person name="Moir J.W.B."/>
            <person name="Ferguson S.J."/>
            <person name="van Spanning R.J.M."/>
            <person name="Richardson P."/>
        </authorList>
    </citation>
    <scope>NUCLEOTIDE SEQUENCE [LARGE SCALE GENOMIC DNA]</scope>
    <source>
        <strain>Pd 1222</strain>
    </source>
</reference>
<keyword id="KW-0963">Cytoplasm</keyword>
<keyword id="KW-0570">Pentose shunt</keyword>
<keyword id="KW-1185">Reference proteome</keyword>
<keyword id="KW-0704">Schiff base</keyword>
<keyword id="KW-0808">Transferase</keyword>
<feature type="chain" id="PRO_1000126336" description="Probable transaldolase">
    <location>
        <begin position="1"/>
        <end position="217"/>
    </location>
</feature>
<feature type="active site" description="Schiff-base intermediate with substrate" evidence="1">
    <location>
        <position position="83"/>
    </location>
</feature>